<feature type="chain" id="PRO_0000087113" description="RecBCD enzyme subunit RecD">
    <location>
        <begin position="1"/>
        <end position="602"/>
    </location>
</feature>
<feature type="binding site" evidence="1">
    <location>
        <begin position="174"/>
        <end position="181"/>
    </location>
    <ligand>
        <name>ATP</name>
        <dbReference type="ChEBI" id="CHEBI:30616"/>
    </ligand>
</feature>
<organism>
    <name type="scientific">Buchnera aphidicola subsp. Schizaphis graminum (strain Sg)</name>
    <dbReference type="NCBI Taxonomy" id="198804"/>
    <lineage>
        <taxon>Bacteria</taxon>
        <taxon>Pseudomonadati</taxon>
        <taxon>Pseudomonadota</taxon>
        <taxon>Gammaproteobacteria</taxon>
        <taxon>Enterobacterales</taxon>
        <taxon>Erwiniaceae</taxon>
        <taxon>Buchnera</taxon>
    </lineage>
</organism>
<reference key="1">
    <citation type="journal article" date="2002" name="Science">
        <title>50 million years of genomic stasis in endosymbiotic bacteria.</title>
        <authorList>
            <person name="Tamas I."/>
            <person name="Klasson L."/>
            <person name="Canbaeck B."/>
            <person name="Naeslund A.K."/>
            <person name="Eriksson A.-S."/>
            <person name="Wernegreen J.J."/>
            <person name="Sandstroem J.P."/>
            <person name="Moran N.A."/>
            <person name="Andersson S.G.E."/>
        </authorList>
    </citation>
    <scope>NUCLEOTIDE SEQUENCE [LARGE SCALE GENOMIC DNA]</scope>
    <source>
        <strain>Sg</strain>
    </source>
</reference>
<dbReference type="EC" id="5.6.2.3" evidence="1"/>
<dbReference type="EMBL" id="AE013218">
    <property type="protein sequence ID" value="AAM67983.1"/>
    <property type="molecule type" value="Genomic_DNA"/>
</dbReference>
<dbReference type="RefSeq" id="WP_011053950.1">
    <property type="nucleotide sequence ID" value="NC_004061.1"/>
</dbReference>
<dbReference type="SMR" id="Q8K9A8"/>
<dbReference type="STRING" id="198804.BUsg_440"/>
<dbReference type="GeneID" id="93003912"/>
<dbReference type="KEGG" id="bas:BUsg_440"/>
<dbReference type="eggNOG" id="COG0507">
    <property type="taxonomic scope" value="Bacteria"/>
</dbReference>
<dbReference type="HOGENOM" id="CLU_007524_1_2_6"/>
<dbReference type="Proteomes" id="UP000000416">
    <property type="component" value="Chromosome"/>
</dbReference>
<dbReference type="GO" id="GO:0009338">
    <property type="term" value="C:exodeoxyribonuclease V complex"/>
    <property type="evidence" value="ECO:0007669"/>
    <property type="project" value="InterPro"/>
</dbReference>
<dbReference type="GO" id="GO:0043139">
    <property type="term" value="F:5'-3' DNA helicase activity"/>
    <property type="evidence" value="ECO:0007669"/>
    <property type="project" value="UniProtKB-UniRule"/>
</dbReference>
<dbReference type="GO" id="GO:0005524">
    <property type="term" value="F:ATP binding"/>
    <property type="evidence" value="ECO:0007669"/>
    <property type="project" value="UniProtKB-UniRule"/>
</dbReference>
<dbReference type="GO" id="GO:0016887">
    <property type="term" value="F:ATP hydrolysis activity"/>
    <property type="evidence" value="ECO:0007669"/>
    <property type="project" value="InterPro"/>
</dbReference>
<dbReference type="GO" id="GO:0003677">
    <property type="term" value="F:DNA binding"/>
    <property type="evidence" value="ECO:0007669"/>
    <property type="project" value="UniProtKB-UniRule"/>
</dbReference>
<dbReference type="GO" id="GO:0008854">
    <property type="term" value="F:exodeoxyribonuclease V activity"/>
    <property type="evidence" value="ECO:0007669"/>
    <property type="project" value="UniProtKB-EC"/>
</dbReference>
<dbReference type="GO" id="GO:0000724">
    <property type="term" value="P:double-strand break repair via homologous recombination"/>
    <property type="evidence" value="ECO:0007669"/>
    <property type="project" value="UniProtKB-UniRule"/>
</dbReference>
<dbReference type="CDD" id="cd18809">
    <property type="entry name" value="SF1_C_RecD"/>
    <property type="match status" value="1"/>
</dbReference>
<dbReference type="Gene3D" id="3.40.50.300">
    <property type="entry name" value="P-loop containing nucleotide triphosphate hydrolases"/>
    <property type="match status" value="3"/>
</dbReference>
<dbReference type="Gene3D" id="1.10.10.1020">
    <property type="entry name" value="RecBCD complex, subunit RecD, N-terminal domain"/>
    <property type="match status" value="1"/>
</dbReference>
<dbReference type="HAMAP" id="MF_01487">
    <property type="entry name" value="RecD"/>
    <property type="match status" value="1"/>
</dbReference>
<dbReference type="InterPro" id="IPR003593">
    <property type="entry name" value="AAA+_ATPase"/>
</dbReference>
<dbReference type="InterPro" id="IPR050534">
    <property type="entry name" value="Coronavir_polyprotein_1ab"/>
</dbReference>
<dbReference type="InterPro" id="IPR014001">
    <property type="entry name" value="Helicase_ATP-bd"/>
</dbReference>
<dbReference type="InterPro" id="IPR027417">
    <property type="entry name" value="P-loop_NTPase"/>
</dbReference>
<dbReference type="InterPro" id="IPR006344">
    <property type="entry name" value="RecD"/>
</dbReference>
<dbReference type="InterPro" id="IPR049550">
    <property type="entry name" value="RecD_N"/>
</dbReference>
<dbReference type="InterPro" id="IPR041851">
    <property type="entry name" value="RecD_N_sf"/>
</dbReference>
<dbReference type="InterPro" id="IPR027785">
    <property type="entry name" value="UvrD-like_helicase_C"/>
</dbReference>
<dbReference type="NCBIfam" id="TIGR01447">
    <property type="entry name" value="recD"/>
    <property type="match status" value="1"/>
</dbReference>
<dbReference type="PANTHER" id="PTHR43788:SF6">
    <property type="entry name" value="DNA HELICASE B"/>
    <property type="match status" value="1"/>
</dbReference>
<dbReference type="PANTHER" id="PTHR43788">
    <property type="entry name" value="DNA2/NAM7 HELICASE FAMILY MEMBER"/>
    <property type="match status" value="1"/>
</dbReference>
<dbReference type="Pfam" id="PF13245">
    <property type="entry name" value="AAA_19"/>
    <property type="match status" value="1"/>
</dbReference>
<dbReference type="Pfam" id="PF21185">
    <property type="entry name" value="RecD_N"/>
    <property type="match status" value="1"/>
</dbReference>
<dbReference type="Pfam" id="PF13538">
    <property type="entry name" value="UvrD_C_2"/>
    <property type="match status" value="1"/>
</dbReference>
<dbReference type="SMART" id="SM00382">
    <property type="entry name" value="AAA"/>
    <property type="match status" value="1"/>
</dbReference>
<dbReference type="SUPFAM" id="SSF52540">
    <property type="entry name" value="P-loop containing nucleoside triphosphate hydrolases"/>
    <property type="match status" value="1"/>
</dbReference>
<dbReference type="PROSITE" id="PS51192">
    <property type="entry name" value="HELICASE_ATP_BIND_1"/>
    <property type="match status" value="1"/>
</dbReference>
<proteinExistence type="inferred from homology"/>
<evidence type="ECO:0000255" key="1">
    <source>
        <dbReference type="HAMAP-Rule" id="MF_01487"/>
    </source>
</evidence>
<accession>Q8K9A8</accession>
<protein>
    <recommendedName>
        <fullName evidence="1">RecBCD enzyme subunit RecD</fullName>
        <ecNumber evidence="1">5.6.2.3</ecNumber>
    </recommendedName>
    <alternativeName>
        <fullName evidence="1">DNA 5'-3' helicase subunit RecB</fullName>
    </alternativeName>
    <alternativeName>
        <fullName evidence="1">Exonuclease V subunit RecD</fullName>
        <shortName evidence="1">ExoV subunit RecD</shortName>
    </alternativeName>
    <alternativeName>
        <fullName evidence="1">Helicase/nuclease RecBCD subunit RecD</fullName>
    </alternativeName>
</protein>
<name>RECD_BUCAP</name>
<keyword id="KW-0067">ATP-binding</keyword>
<keyword id="KW-0227">DNA damage</keyword>
<keyword id="KW-0234">DNA repair</keyword>
<keyword id="KW-0238">DNA-binding</keyword>
<keyword id="KW-0269">Exonuclease</keyword>
<keyword id="KW-0347">Helicase</keyword>
<keyword id="KW-0378">Hydrolase</keyword>
<keyword id="KW-0413">Isomerase</keyword>
<keyword id="KW-0540">Nuclease</keyword>
<keyword id="KW-0547">Nucleotide-binding</keyword>
<sequence length="602" mass="70408">MNMSHLLQNFANKKIITLVDFYFSQFISKKNSIIMLISACVSFESKNGHIFLPIEYFEKNCFFSISNKQFINKILKCLNKKKINWSLELSEHISCGDGSIITPLVFYKDKIYLYKIWKAEKKILERLYEKNQFDTIDTQQCLNILNNLFSKKKHDLQKIAVILTLINNIIFITGGPGTGKTTIILKIIIALIKNAKKKIKIQLSAPTGKATENLIEILNDKWLNRYLLKEEKKQFSFNPIMTIHQLLGISKKSEKIFFNKNNLLMIDILIIDEASMIDILMMSNILSALSKKTKIIFIGDHNQLKPVKSSSILKYICSYAEDGYSLKTQSILQEITQNSIINYKINKKNTSYISDKICVLKKSYRFEKKTGIYILSNAVYNKETKIFEKLFKNSIENVFFYEINSEIEYKKMINIIINNNKIFWRKIYEKKNIKEIIKTFKNHQILCIVKNGFFGVNFINKILEEEMYKRNIFNKRFYINNKLWYIGKPIIITENNQCLGIFNGEIGITNLSQKNTLQVSFLKKDNFIENIPIEILKNYKTSWSITVHKAQGSEFNNISLILPNKNLKILKKDILYTGITRTRKQLNIFSTKEIFIKTVLKN</sequence>
<comment type="function">
    <text evidence="1">A helicase/nuclease that prepares dsDNA breaks (DSB) for recombinational DNA repair. Binds to DSBs and unwinds DNA via a highly rapid and processive ATP-dependent bidirectional helicase activity. Unwinds dsDNA until it encounters a Chi (crossover hotspot instigator) sequence from the 3' direction. Cuts ssDNA a few nucleotides 3' to the Chi site. The properties and activities of the enzyme are changed at Chi. The Chi-altered holoenzyme produces a long 3'-ssDNA overhang and facilitates RecA-binding to the ssDNA for homologous DNA recombination and repair. Holoenzyme degrades any linearized DNA that is unable to undergo homologous recombination. In the holoenzyme this subunit has ssDNA-dependent ATPase and 5'-3' helicase activity. When added to pre-assembled RecBC greatly stimulates nuclease activity and augments holoenzyme processivity. Negatively regulates the RecA-loading ability of RecBCD.</text>
</comment>
<comment type="catalytic activity">
    <reaction evidence="1">
        <text>Couples ATP hydrolysis with the unwinding of duplex DNA at the replication fork by translocating in the 5'-3' direction. This creates two antiparallel DNA single strands (ssDNA). The leading ssDNA polymer is the template for DNA polymerase III holoenzyme which synthesizes a continuous strand.</text>
        <dbReference type="EC" id="5.6.2.3"/>
    </reaction>
</comment>
<comment type="catalytic activity">
    <reaction evidence="1">
        <text>ATP + H2O = ADP + phosphate + H(+)</text>
        <dbReference type="Rhea" id="RHEA:13065"/>
        <dbReference type="ChEBI" id="CHEBI:15377"/>
        <dbReference type="ChEBI" id="CHEBI:15378"/>
        <dbReference type="ChEBI" id="CHEBI:30616"/>
        <dbReference type="ChEBI" id="CHEBI:43474"/>
        <dbReference type="ChEBI" id="CHEBI:456216"/>
        <dbReference type="EC" id="5.6.2.3"/>
    </reaction>
</comment>
<comment type="subunit">
    <text evidence="1">Heterotrimer of RecB, RecC and RecD. All subunits contribute to DNA-binding.</text>
</comment>
<comment type="miscellaneous">
    <text evidence="1">In the RecBCD complex, RecB has a slow 3'-5' helicase, an exonuclease activity and loads RecA onto ssDNA, RecD has a fast 5'-3' helicase activity, while RecC stimulates the ATPase and processivity of the RecB helicase and contributes to recognition of the Chi site.</text>
</comment>
<comment type="similarity">
    <text evidence="1">Belongs to the RecD family.</text>
</comment>
<gene>
    <name evidence="1" type="primary">recD</name>
    <name type="ordered locus">BUsg_440</name>
</gene>